<name>RL25_RHILO</name>
<proteinExistence type="inferred from homology"/>
<sequence length="213" mass="23088">MSHDTYELKAEAREQVGKGSARAVRRNGKVPAVIYGDKQPPLAIALTYKDIYYKIHGGGFLTTIATIDVDGKKIQVLPKDFQLDPVKDFPVHVDFLRIGKDTEVNVDVPVHFINEDKSPGIKRGGVLNIVRHEVEFHCPANAIPEFITIDLTGTNIGDSIHISAVQLPAGVKPVISDRDFTIATIAGSSAMKPEAEETVEVAAPEAAPVAEEK</sequence>
<accession>Q98HV7</accession>
<dbReference type="EMBL" id="BA000012">
    <property type="protein sequence ID" value="BAB49759.1"/>
    <property type="molecule type" value="Genomic_DNA"/>
</dbReference>
<dbReference type="RefSeq" id="WP_010911108.1">
    <property type="nucleotide sequence ID" value="NC_002678.2"/>
</dbReference>
<dbReference type="SMR" id="Q98HV7"/>
<dbReference type="KEGG" id="mlo:mlr2692"/>
<dbReference type="eggNOG" id="COG1825">
    <property type="taxonomic scope" value="Bacteria"/>
</dbReference>
<dbReference type="HOGENOM" id="CLU_075939_0_0_5"/>
<dbReference type="Proteomes" id="UP000000552">
    <property type="component" value="Chromosome"/>
</dbReference>
<dbReference type="GO" id="GO:0022625">
    <property type="term" value="C:cytosolic large ribosomal subunit"/>
    <property type="evidence" value="ECO:0007669"/>
    <property type="project" value="TreeGrafter"/>
</dbReference>
<dbReference type="GO" id="GO:0008097">
    <property type="term" value="F:5S rRNA binding"/>
    <property type="evidence" value="ECO:0007669"/>
    <property type="project" value="InterPro"/>
</dbReference>
<dbReference type="GO" id="GO:0003735">
    <property type="term" value="F:structural constituent of ribosome"/>
    <property type="evidence" value="ECO:0007669"/>
    <property type="project" value="InterPro"/>
</dbReference>
<dbReference type="GO" id="GO:0006412">
    <property type="term" value="P:translation"/>
    <property type="evidence" value="ECO:0007669"/>
    <property type="project" value="UniProtKB-UniRule"/>
</dbReference>
<dbReference type="CDD" id="cd00495">
    <property type="entry name" value="Ribosomal_L25_TL5_CTC"/>
    <property type="match status" value="1"/>
</dbReference>
<dbReference type="Gene3D" id="2.170.120.20">
    <property type="entry name" value="Ribosomal protein L25, beta domain"/>
    <property type="match status" value="1"/>
</dbReference>
<dbReference type="Gene3D" id="2.40.240.10">
    <property type="entry name" value="Ribosomal Protein L25, Chain P"/>
    <property type="match status" value="1"/>
</dbReference>
<dbReference type="HAMAP" id="MF_01334">
    <property type="entry name" value="Ribosomal_bL25_CTC"/>
    <property type="match status" value="1"/>
</dbReference>
<dbReference type="InterPro" id="IPR020056">
    <property type="entry name" value="Rbsml_bL25/Gln-tRNA_synth_N"/>
</dbReference>
<dbReference type="InterPro" id="IPR011035">
    <property type="entry name" value="Ribosomal_bL25/Gln-tRNA_synth"/>
</dbReference>
<dbReference type="InterPro" id="IPR020057">
    <property type="entry name" value="Ribosomal_bL25_b-dom"/>
</dbReference>
<dbReference type="InterPro" id="IPR037121">
    <property type="entry name" value="Ribosomal_bL25_C"/>
</dbReference>
<dbReference type="InterPro" id="IPR001021">
    <property type="entry name" value="Ribosomal_bL25_long"/>
</dbReference>
<dbReference type="InterPro" id="IPR029751">
    <property type="entry name" value="Ribosomal_L25_dom"/>
</dbReference>
<dbReference type="InterPro" id="IPR020930">
    <property type="entry name" value="Ribosomal_uL5_bac-type"/>
</dbReference>
<dbReference type="NCBIfam" id="TIGR00731">
    <property type="entry name" value="bL25_bact_ctc"/>
    <property type="match status" value="1"/>
</dbReference>
<dbReference type="NCBIfam" id="NF004128">
    <property type="entry name" value="PRK05618.1-2"/>
    <property type="match status" value="1"/>
</dbReference>
<dbReference type="NCBIfam" id="NF004612">
    <property type="entry name" value="PRK05943.1"/>
    <property type="match status" value="1"/>
</dbReference>
<dbReference type="PANTHER" id="PTHR33284">
    <property type="entry name" value="RIBOSOMAL PROTEIN L25/GLN-TRNA SYNTHETASE, ANTI-CODON-BINDING DOMAIN-CONTAINING PROTEIN"/>
    <property type="match status" value="1"/>
</dbReference>
<dbReference type="PANTHER" id="PTHR33284:SF1">
    <property type="entry name" value="RIBOSOMAL PROTEIN L25_GLN-TRNA SYNTHETASE, ANTI-CODON-BINDING DOMAIN-CONTAINING PROTEIN"/>
    <property type="match status" value="1"/>
</dbReference>
<dbReference type="Pfam" id="PF01386">
    <property type="entry name" value="Ribosomal_L25p"/>
    <property type="match status" value="1"/>
</dbReference>
<dbReference type="Pfam" id="PF14693">
    <property type="entry name" value="Ribosomal_TL5_C"/>
    <property type="match status" value="1"/>
</dbReference>
<dbReference type="SUPFAM" id="SSF50715">
    <property type="entry name" value="Ribosomal protein L25-like"/>
    <property type="match status" value="1"/>
</dbReference>
<keyword id="KW-0687">Ribonucleoprotein</keyword>
<keyword id="KW-0689">Ribosomal protein</keyword>
<keyword id="KW-0694">RNA-binding</keyword>
<keyword id="KW-0699">rRNA-binding</keyword>
<gene>
    <name evidence="1" type="primary">rplY</name>
    <name evidence="1" type="synonym">ctc</name>
    <name type="ordered locus">mlr2692</name>
</gene>
<protein>
    <recommendedName>
        <fullName evidence="1">Large ribosomal subunit protein bL25</fullName>
    </recommendedName>
    <alternativeName>
        <fullName evidence="2">50S ribosomal protein L25</fullName>
    </alternativeName>
    <alternativeName>
        <fullName evidence="1">General stress protein CTC</fullName>
    </alternativeName>
</protein>
<evidence type="ECO:0000255" key="1">
    <source>
        <dbReference type="HAMAP-Rule" id="MF_01334"/>
    </source>
</evidence>
<evidence type="ECO:0000305" key="2"/>
<feature type="chain" id="PRO_0000181584" description="Large ribosomal subunit protein bL25">
    <location>
        <begin position="1"/>
        <end position="213"/>
    </location>
</feature>
<organism>
    <name type="scientific">Mesorhizobium japonicum (strain LMG 29417 / CECT 9101 / MAFF 303099)</name>
    <name type="common">Mesorhizobium loti (strain MAFF 303099)</name>
    <dbReference type="NCBI Taxonomy" id="266835"/>
    <lineage>
        <taxon>Bacteria</taxon>
        <taxon>Pseudomonadati</taxon>
        <taxon>Pseudomonadota</taxon>
        <taxon>Alphaproteobacteria</taxon>
        <taxon>Hyphomicrobiales</taxon>
        <taxon>Phyllobacteriaceae</taxon>
        <taxon>Mesorhizobium</taxon>
    </lineage>
</organism>
<reference key="1">
    <citation type="journal article" date="2000" name="DNA Res.">
        <title>Complete genome structure of the nitrogen-fixing symbiotic bacterium Mesorhizobium loti.</title>
        <authorList>
            <person name="Kaneko T."/>
            <person name="Nakamura Y."/>
            <person name="Sato S."/>
            <person name="Asamizu E."/>
            <person name="Kato T."/>
            <person name="Sasamoto S."/>
            <person name="Watanabe A."/>
            <person name="Idesawa K."/>
            <person name="Ishikawa A."/>
            <person name="Kawashima K."/>
            <person name="Kimura T."/>
            <person name="Kishida Y."/>
            <person name="Kiyokawa C."/>
            <person name="Kohara M."/>
            <person name="Matsumoto M."/>
            <person name="Matsuno A."/>
            <person name="Mochizuki Y."/>
            <person name="Nakayama S."/>
            <person name="Nakazaki N."/>
            <person name="Shimpo S."/>
            <person name="Sugimoto M."/>
            <person name="Takeuchi C."/>
            <person name="Yamada M."/>
            <person name="Tabata S."/>
        </authorList>
    </citation>
    <scope>NUCLEOTIDE SEQUENCE [LARGE SCALE GENOMIC DNA]</scope>
    <source>
        <strain>LMG 29417 / CECT 9101 / MAFF 303099</strain>
    </source>
</reference>
<comment type="function">
    <text evidence="1">This is one of the proteins that binds to the 5S RNA in the ribosome where it forms part of the central protuberance.</text>
</comment>
<comment type="subunit">
    <text evidence="1">Part of the 50S ribosomal subunit; part of the 5S rRNA/L5/L18/L25 subcomplex. Contacts the 5S rRNA. Binds to the 5S rRNA independently of L5 and L18.</text>
</comment>
<comment type="similarity">
    <text evidence="1">Belongs to the bacterial ribosomal protein bL25 family. CTC subfamily.</text>
</comment>